<accession>Q96SC8</accession>
<accession>Q5TFQ3</accession>
<reference key="1">
    <citation type="journal article" date="2006" name="Nature">
        <title>The DNA sequence and biological annotation of human chromosome 1.</title>
        <authorList>
            <person name="Gregory S.G."/>
            <person name="Barlow K.F."/>
            <person name="McLay K.E."/>
            <person name="Kaul R."/>
            <person name="Swarbreck D."/>
            <person name="Dunham A."/>
            <person name="Scott C.E."/>
            <person name="Howe K.L."/>
            <person name="Woodfine K."/>
            <person name="Spencer C.C.A."/>
            <person name="Jones M.C."/>
            <person name="Gillson C."/>
            <person name="Searle S."/>
            <person name="Zhou Y."/>
            <person name="Kokocinski F."/>
            <person name="McDonald L."/>
            <person name="Evans R."/>
            <person name="Phillips K."/>
            <person name="Atkinson A."/>
            <person name="Cooper R."/>
            <person name="Jones C."/>
            <person name="Hall R.E."/>
            <person name="Andrews T.D."/>
            <person name="Lloyd C."/>
            <person name="Ainscough R."/>
            <person name="Almeida J.P."/>
            <person name="Ambrose K.D."/>
            <person name="Anderson F."/>
            <person name="Andrew R.W."/>
            <person name="Ashwell R.I.S."/>
            <person name="Aubin K."/>
            <person name="Babbage A.K."/>
            <person name="Bagguley C.L."/>
            <person name="Bailey J."/>
            <person name="Beasley H."/>
            <person name="Bethel G."/>
            <person name="Bird C.P."/>
            <person name="Bray-Allen S."/>
            <person name="Brown J.Y."/>
            <person name="Brown A.J."/>
            <person name="Buckley D."/>
            <person name="Burton J."/>
            <person name="Bye J."/>
            <person name="Carder C."/>
            <person name="Chapman J.C."/>
            <person name="Clark S.Y."/>
            <person name="Clarke G."/>
            <person name="Clee C."/>
            <person name="Cobley V."/>
            <person name="Collier R.E."/>
            <person name="Corby N."/>
            <person name="Coville G.J."/>
            <person name="Davies J."/>
            <person name="Deadman R."/>
            <person name="Dunn M."/>
            <person name="Earthrowl M."/>
            <person name="Ellington A.G."/>
            <person name="Errington H."/>
            <person name="Frankish A."/>
            <person name="Frankland J."/>
            <person name="French L."/>
            <person name="Garner P."/>
            <person name="Garnett J."/>
            <person name="Gay L."/>
            <person name="Ghori M.R.J."/>
            <person name="Gibson R."/>
            <person name="Gilby L.M."/>
            <person name="Gillett W."/>
            <person name="Glithero R.J."/>
            <person name="Grafham D.V."/>
            <person name="Griffiths C."/>
            <person name="Griffiths-Jones S."/>
            <person name="Grocock R."/>
            <person name="Hammond S."/>
            <person name="Harrison E.S.I."/>
            <person name="Hart E."/>
            <person name="Haugen E."/>
            <person name="Heath P.D."/>
            <person name="Holmes S."/>
            <person name="Holt K."/>
            <person name="Howden P.J."/>
            <person name="Hunt A.R."/>
            <person name="Hunt S.E."/>
            <person name="Hunter G."/>
            <person name="Isherwood J."/>
            <person name="James R."/>
            <person name="Johnson C."/>
            <person name="Johnson D."/>
            <person name="Joy A."/>
            <person name="Kay M."/>
            <person name="Kershaw J.K."/>
            <person name="Kibukawa M."/>
            <person name="Kimberley A.M."/>
            <person name="King A."/>
            <person name="Knights A.J."/>
            <person name="Lad H."/>
            <person name="Laird G."/>
            <person name="Lawlor S."/>
            <person name="Leongamornlert D.A."/>
            <person name="Lloyd D.M."/>
            <person name="Loveland J."/>
            <person name="Lovell J."/>
            <person name="Lush M.J."/>
            <person name="Lyne R."/>
            <person name="Martin S."/>
            <person name="Mashreghi-Mohammadi M."/>
            <person name="Matthews L."/>
            <person name="Matthews N.S.W."/>
            <person name="McLaren S."/>
            <person name="Milne S."/>
            <person name="Mistry S."/>
            <person name="Moore M.J.F."/>
            <person name="Nickerson T."/>
            <person name="O'Dell C.N."/>
            <person name="Oliver K."/>
            <person name="Palmeiri A."/>
            <person name="Palmer S.A."/>
            <person name="Parker A."/>
            <person name="Patel D."/>
            <person name="Pearce A.V."/>
            <person name="Peck A.I."/>
            <person name="Pelan S."/>
            <person name="Phelps K."/>
            <person name="Phillimore B.J."/>
            <person name="Plumb R."/>
            <person name="Rajan J."/>
            <person name="Raymond C."/>
            <person name="Rouse G."/>
            <person name="Saenphimmachak C."/>
            <person name="Sehra H.K."/>
            <person name="Sheridan E."/>
            <person name="Shownkeen R."/>
            <person name="Sims S."/>
            <person name="Skuce C.D."/>
            <person name="Smith M."/>
            <person name="Steward C."/>
            <person name="Subramanian S."/>
            <person name="Sycamore N."/>
            <person name="Tracey A."/>
            <person name="Tromans A."/>
            <person name="Van Helmond Z."/>
            <person name="Wall M."/>
            <person name="Wallis J.M."/>
            <person name="White S."/>
            <person name="Whitehead S.L."/>
            <person name="Wilkinson J.E."/>
            <person name="Willey D.L."/>
            <person name="Williams H."/>
            <person name="Wilming L."/>
            <person name="Wray P.W."/>
            <person name="Wu Z."/>
            <person name="Coulson A."/>
            <person name="Vaudin M."/>
            <person name="Sulston J.E."/>
            <person name="Durbin R.M."/>
            <person name="Hubbard T."/>
            <person name="Wooster R."/>
            <person name="Dunham I."/>
            <person name="Carter N.P."/>
            <person name="McVean G."/>
            <person name="Ross M.T."/>
            <person name="Harrow J."/>
            <person name="Olson M.V."/>
            <person name="Beck S."/>
            <person name="Rogers J."/>
            <person name="Bentley D.R."/>
        </authorList>
    </citation>
    <scope>NUCLEOTIDE SEQUENCE [LARGE SCALE GENOMIC DNA]</scope>
</reference>
<reference key="2">
    <citation type="journal article" date="2002" name="Genomics">
        <title>Novel paralogy relations among human chromosomes support a link between the phylogeny of doublesex-related genes and the evolution of sex determination.</title>
        <authorList>
            <person name="Ottolenghi C."/>
            <person name="Fellous M."/>
            <person name="Barbieri M."/>
            <person name="McElreavey K."/>
        </authorList>
    </citation>
    <scope>NUCLEOTIDE SEQUENCE [MRNA] OF 57-542</scope>
    <scope>TISSUE SPECIFICITY</scope>
    <source>
        <tissue>Testis</tissue>
    </source>
</reference>
<comment type="function">
    <text>May be involved in sexual development.</text>
</comment>
<comment type="subcellular location">
    <subcellularLocation>
        <location evidence="2">Nucleus</location>
    </subcellularLocation>
</comment>
<comment type="tissue specificity">
    <text evidence="4">Expressed in testis.</text>
</comment>
<comment type="similarity">
    <text evidence="5">Belongs to the DMRT family.</text>
</comment>
<protein>
    <recommendedName>
        <fullName>Doublesex- and mab-3-related transcription factor A2</fullName>
    </recommendedName>
    <alternativeName>
        <fullName>Doublesex- and mab-3-related transcription factor 5</fullName>
    </alternativeName>
</protein>
<evidence type="ECO:0000255" key="1"/>
<evidence type="ECO:0000255" key="2">
    <source>
        <dbReference type="PROSITE-ProRule" id="PRU00070"/>
    </source>
</evidence>
<evidence type="ECO:0000256" key="3">
    <source>
        <dbReference type="SAM" id="MobiDB-lite"/>
    </source>
</evidence>
<evidence type="ECO:0000269" key="4">
    <source>
    </source>
</evidence>
<evidence type="ECO:0000305" key="5"/>
<organism>
    <name type="scientific">Homo sapiens</name>
    <name type="common">Human</name>
    <dbReference type="NCBI Taxonomy" id="9606"/>
    <lineage>
        <taxon>Eukaryota</taxon>
        <taxon>Metazoa</taxon>
        <taxon>Chordata</taxon>
        <taxon>Craniata</taxon>
        <taxon>Vertebrata</taxon>
        <taxon>Euteleostomi</taxon>
        <taxon>Mammalia</taxon>
        <taxon>Eutheria</taxon>
        <taxon>Euarchontoglires</taxon>
        <taxon>Primates</taxon>
        <taxon>Haplorrhini</taxon>
        <taxon>Catarrhini</taxon>
        <taxon>Hominidae</taxon>
        <taxon>Homo</taxon>
    </lineage>
</organism>
<feature type="chain" id="PRO_0000333772" description="Doublesex- and mab-3-related transcription factor A2">
    <location>
        <begin position="1"/>
        <end position="542"/>
    </location>
</feature>
<feature type="domain" description="DMA" evidence="1">
    <location>
        <begin position="314"/>
        <end position="349"/>
    </location>
</feature>
<feature type="DNA-binding region" description="DM" evidence="2">
    <location>
        <begin position="70"/>
        <end position="117"/>
    </location>
</feature>
<feature type="region of interest" description="Disordered" evidence="3">
    <location>
        <begin position="201"/>
        <end position="316"/>
    </location>
</feature>
<name>DMTA2_HUMAN</name>
<dbReference type="EMBL" id="AL049637">
    <property type="status" value="NOT_ANNOTATED_CDS"/>
    <property type="molecule type" value="Genomic_DNA"/>
</dbReference>
<dbReference type="EMBL" id="AJ301580">
    <property type="protein sequence ID" value="CAC37946.1"/>
    <property type="molecule type" value="mRNA"/>
</dbReference>
<dbReference type="CCDS" id="CCDS44141.1"/>
<dbReference type="RefSeq" id="NP_115486.1">
    <property type="nucleotide sequence ID" value="NM_032110.3"/>
</dbReference>
<dbReference type="RefSeq" id="XP_011540239.1">
    <property type="nucleotide sequence ID" value="XM_011541937.3"/>
</dbReference>
<dbReference type="RefSeq" id="XP_054194121.1">
    <property type="nucleotide sequence ID" value="XM_054338146.1"/>
</dbReference>
<dbReference type="SMR" id="Q96SC8"/>
<dbReference type="FunCoup" id="Q96SC8">
    <property type="interactions" value="1000"/>
</dbReference>
<dbReference type="STRING" id="9606.ENSP00000383909"/>
<dbReference type="iPTMnet" id="Q96SC8"/>
<dbReference type="PhosphoSitePlus" id="Q96SC8"/>
<dbReference type="BioMuta" id="DMRTA2"/>
<dbReference type="DMDM" id="189044724"/>
<dbReference type="jPOST" id="Q96SC8"/>
<dbReference type="MassIVE" id="Q96SC8"/>
<dbReference type="PaxDb" id="9606-ENSP00000383909"/>
<dbReference type="PeptideAtlas" id="Q96SC8"/>
<dbReference type="ProteomicsDB" id="78102"/>
<dbReference type="Antibodypedia" id="32925">
    <property type="antibodies" value="98 antibodies from 20 providers"/>
</dbReference>
<dbReference type="DNASU" id="63950"/>
<dbReference type="Ensembl" id="ENST00000404795.4">
    <property type="protein sequence ID" value="ENSP00000383909.3"/>
    <property type="gene ID" value="ENSG00000142700.12"/>
</dbReference>
<dbReference type="Ensembl" id="ENST00000418121.5">
    <property type="protein sequence ID" value="ENSP00000399370.1"/>
    <property type="gene ID" value="ENSG00000142700.12"/>
</dbReference>
<dbReference type="GeneID" id="63950"/>
<dbReference type="KEGG" id="hsa:63950"/>
<dbReference type="MANE-Select" id="ENST00000404795.4">
    <property type="protein sequence ID" value="ENSP00000383909.3"/>
    <property type="RefSeq nucleotide sequence ID" value="NM_032110.3"/>
    <property type="RefSeq protein sequence ID" value="NP_115486.1"/>
</dbReference>
<dbReference type="UCSC" id="uc010ona.3">
    <property type="organism name" value="human"/>
</dbReference>
<dbReference type="AGR" id="HGNC:13908"/>
<dbReference type="CTD" id="63950"/>
<dbReference type="DisGeNET" id="63950"/>
<dbReference type="GeneCards" id="DMRTA2"/>
<dbReference type="HGNC" id="HGNC:13908">
    <property type="gene designation" value="DMRTA2"/>
</dbReference>
<dbReference type="HPA" id="ENSG00000142700">
    <property type="expression patterns" value="Tissue enhanced (esophagus, pituitary gland, testis)"/>
</dbReference>
<dbReference type="MalaCards" id="DMRTA2"/>
<dbReference type="MIM" id="614804">
    <property type="type" value="gene"/>
</dbReference>
<dbReference type="neXtProt" id="NX_Q96SC8"/>
<dbReference type="OpenTargets" id="ENSG00000142700"/>
<dbReference type="PharmGKB" id="PA27385"/>
<dbReference type="VEuPathDB" id="HostDB:ENSG00000142700"/>
<dbReference type="eggNOG" id="KOG3815">
    <property type="taxonomic scope" value="Eukaryota"/>
</dbReference>
<dbReference type="GeneTree" id="ENSGT00940000161649"/>
<dbReference type="HOGENOM" id="CLU_038477_1_0_1"/>
<dbReference type="InParanoid" id="Q96SC8"/>
<dbReference type="OMA" id="LHKEQSY"/>
<dbReference type="OrthoDB" id="9942608at2759"/>
<dbReference type="PAN-GO" id="Q96SC8">
    <property type="GO annotations" value="5 GO annotations based on evolutionary models"/>
</dbReference>
<dbReference type="PhylomeDB" id="Q96SC8"/>
<dbReference type="TreeFam" id="TF317837"/>
<dbReference type="PathwayCommons" id="Q96SC8"/>
<dbReference type="BioGRID-ORCS" id="63950">
    <property type="hits" value="66 hits in 1167 CRISPR screens"/>
</dbReference>
<dbReference type="GenomeRNAi" id="63950"/>
<dbReference type="Pharos" id="Q96SC8">
    <property type="development level" value="Tbio"/>
</dbReference>
<dbReference type="PRO" id="PR:Q96SC8"/>
<dbReference type="Proteomes" id="UP000005640">
    <property type="component" value="Chromosome 1"/>
</dbReference>
<dbReference type="RNAct" id="Q96SC8">
    <property type="molecule type" value="protein"/>
</dbReference>
<dbReference type="Bgee" id="ENSG00000142700">
    <property type="expression patterns" value="Expressed in ventricular zone and 37 other cell types or tissues"/>
</dbReference>
<dbReference type="GO" id="GO:0000785">
    <property type="term" value="C:chromatin"/>
    <property type="evidence" value="ECO:0000247"/>
    <property type="project" value="NTNU_SB"/>
</dbReference>
<dbReference type="GO" id="GO:0005634">
    <property type="term" value="C:nucleus"/>
    <property type="evidence" value="ECO:0000318"/>
    <property type="project" value="GO_Central"/>
</dbReference>
<dbReference type="GO" id="GO:0000981">
    <property type="term" value="F:DNA-binding transcription factor activity, RNA polymerase II-specific"/>
    <property type="evidence" value="ECO:0000247"/>
    <property type="project" value="NTNU_SB"/>
</dbReference>
<dbReference type="GO" id="GO:0042802">
    <property type="term" value="F:identical protein binding"/>
    <property type="evidence" value="ECO:0007669"/>
    <property type="project" value="Ensembl"/>
</dbReference>
<dbReference type="GO" id="GO:0046872">
    <property type="term" value="F:metal ion binding"/>
    <property type="evidence" value="ECO:0007669"/>
    <property type="project" value="UniProtKB-KW"/>
</dbReference>
<dbReference type="GO" id="GO:0000978">
    <property type="term" value="F:RNA polymerase II cis-regulatory region sequence-specific DNA binding"/>
    <property type="evidence" value="ECO:0000318"/>
    <property type="project" value="GO_Central"/>
</dbReference>
<dbReference type="GO" id="GO:1990837">
    <property type="term" value="F:sequence-specific double-stranded DNA binding"/>
    <property type="evidence" value="ECO:0000314"/>
    <property type="project" value="ARUK-UCL"/>
</dbReference>
<dbReference type="GO" id="GO:0021796">
    <property type="term" value="P:cerebral cortex regionalization"/>
    <property type="evidence" value="ECO:0007669"/>
    <property type="project" value="Ensembl"/>
</dbReference>
<dbReference type="GO" id="GO:0071542">
    <property type="term" value="P:dopaminergic neuron differentiation"/>
    <property type="evidence" value="ECO:0007669"/>
    <property type="project" value="Ensembl"/>
</dbReference>
<dbReference type="GO" id="GO:0007405">
    <property type="term" value="P:neuroblast proliferation"/>
    <property type="evidence" value="ECO:0007669"/>
    <property type="project" value="Ensembl"/>
</dbReference>
<dbReference type="GO" id="GO:0048665">
    <property type="term" value="P:neuron fate specification"/>
    <property type="evidence" value="ECO:0007669"/>
    <property type="project" value="Ensembl"/>
</dbReference>
<dbReference type="GO" id="GO:0002052">
    <property type="term" value="P:positive regulation of neuroblast proliferation"/>
    <property type="evidence" value="ECO:0007669"/>
    <property type="project" value="Ensembl"/>
</dbReference>
<dbReference type="GO" id="GO:0006357">
    <property type="term" value="P:regulation of transcription by RNA polymerase II"/>
    <property type="evidence" value="ECO:0000318"/>
    <property type="project" value="GO_Central"/>
</dbReference>
<dbReference type="GO" id="GO:0007548">
    <property type="term" value="P:sex differentiation"/>
    <property type="evidence" value="ECO:0000318"/>
    <property type="project" value="GO_Central"/>
</dbReference>
<dbReference type="GO" id="GO:0035914">
    <property type="term" value="P:skeletal muscle cell differentiation"/>
    <property type="evidence" value="ECO:0007669"/>
    <property type="project" value="Ensembl"/>
</dbReference>
<dbReference type="GO" id="GO:0048866">
    <property type="term" value="P:stem cell fate specification"/>
    <property type="evidence" value="ECO:0007669"/>
    <property type="project" value="Ensembl"/>
</dbReference>
<dbReference type="CDD" id="cd14418">
    <property type="entry name" value="CUE_DMA_DMRTA2"/>
    <property type="match status" value="1"/>
</dbReference>
<dbReference type="FunFam" id="4.10.1040.10:FF:000001">
    <property type="entry name" value="doublesex- and mab-3-related transcription factor 1"/>
    <property type="match status" value="1"/>
</dbReference>
<dbReference type="Gene3D" id="4.10.1040.10">
    <property type="entry name" value="DM DNA-binding domain"/>
    <property type="match status" value="1"/>
</dbReference>
<dbReference type="InterPro" id="IPR001275">
    <property type="entry name" value="DM_DNA-bd"/>
</dbReference>
<dbReference type="InterPro" id="IPR036407">
    <property type="entry name" value="DM_DNA-bd_sf"/>
</dbReference>
<dbReference type="InterPro" id="IPR005173">
    <property type="entry name" value="DMA"/>
</dbReference>
<dbReference type="InterPro" id="IPR026607">
    <property type="entry name" value="DMRT"/>
</dbReference>
<dbReference type="InterPro" id="IPR046472">
    <property type="entry name" value="DMRT5_1_DMB_dom"/>
</dbReference>
<dbReference type="InterPro" id="IPR009060">
    <property type="entry name" value="UBA-like_sf"/>
</dbReference>
<dbReference type="PANTHER" id="PTHR12322">
    <property type="entry name" value="DOUBLESEX AND MAB-3 RELATED TRANSCRIPTION FACTOR DMRT"/>
    <property type="match status" value="1"/>
</dbReference>
<dbReference type="PANTHER" id="PTHR12322:SF76">
    <property type="entry name" value="DOUBLESEX- AND MAB-3-RELATED TRANSCRIPTION FACTOR A2"/>
    <property type="match status" value="1"/>
</dbReference>
<dbReference type="Pfam" id="PF00751">
    <property type="entry name" value="DM"/>
    <property type="match status" value="1"/>
</dbReference>
<dbReference type="Pfam" id="PF03474">
    <property type="entry name" value="DMA"/>
    <property type="match status" value="1"/>
</dbReference>
<dbReference type="Pfam" id="PF20624">
    <property type="entry name" value="DMRT5_DMB"/>
    <property type="match status" value="1"/>
</dbReference>
<dbReference type="SMART" id="SM00301">
    <property type="entry name" value="DM"/>
    <property type="match status" value="1"/>
</dbReference>
<dbReference type="SUPFAM" id="SSF82927">
    <property type="entry name" value="Cysteine-rich DNA binding domain, (DM domain)"/>
    <property type="match status" value="1"/>
</dbReference>
<dbReference type="SUPFAM" id="SSF46934">
    <property type="entry name" value="UBA-like"/>
    <property type="match status" value="1"/>
</dbReference>
<dbReference type="PROSITE" id="PS40000">
    <property type="entry name" value="DM_1"/>
    <property type="match status" value="1"/>
</dbReference>
<dbReference type="PROSITE" id="PS50809">
    <property type="entry name" value="DM_2"/>
    <property type="match status" value="1"/>
</dbReference>
<keyword id="KW-0238">DNA-binding</keyword>
<keyword id="KW-0479">Metal-binding</keyword>
<keyword id="KW-0539">Nucleus</keyword>
<keyword id="KW-1267">Proteomics identification</keyword>
<keyword id="KW-1185">Reference proteome</keyword>
<keyword id="KW-0862">Zinc</keyword>
<gene>
    <name type="primary">DMRTA2</name>
    <name type="synonym">DMRT5</name>
</gene>
<proteinExistence type="evidence at protein level"/>
<sequence>MELRSELPSVPGAATAAAATATGPPVASVASVAAAAAAAASLPVSVAGGLLRGPPLLLRAAEKYPRTPKCARCRNHGVVSALKGHKRYCRWKDCLCAKCTLIAERQRVMAAQVALRRQQAQEENEARELQLLYGTAEGLALAAANGIIPPRPAYEVFGSVCAADGGGPGAGAPAGTGGGAAGAGGSEAKLQKFDLFPKTLLQAGRPGSPLPPPVKPLSPDGADSGPGTSSPEVRPGSGSENGDGESFSGSPLARASKEAGGSCPGSAGPGGGGEEDSPGSASPLGSESGSEADKEEGEAAPAPGLGGGSGPRQRTPLDILTRVFPGHRRGVLELVLQGCGGDVVQAIEQVLNHHRGGLAAGLGPAAPPDKAAVGAAAAADDAWPSRVDAAAAAAAAAGGPGLPAPLQAGPAAPPHHRPLLAGAMAPGALGSLSSRSAFSPLQPNASHFGADAGAYPLGAPLGLSPLRLAYSAAAAHSRGLAFMAPYSTAGLVPTLGFRPPMDYAFSDLMRDRSAAAAAAVHKEPTYGGGLYGPMVNGAPEKQ</sequence>